<evidence type="ECO:0000255" key="1">
    <source>
        <dbReference type="HAMAP-Rule" id="MF_00575"/>
    </source>
</evidence>
<feature type="chain" id="PRO_0000214124" description="UDP-2,3-diacylglucosamine hydrolase">
    <location>
        <begin position="1"/>
        <end position="240"/>
    </location>
</feature>
<feature type="binding site" evidence="1">
    <location>
        <position position="8"/>
    </location>
    <ligand>
        <name>Mn(2+)</name>
        <dbReference type="ChEBI" id="CHEBI:29035"/>
        <label>1</label>
    </ligand>
</feature>
<feature type="binding site" evidence="1">
    <location>
        <position position="10"/>
    </location>
    <ligand>
        <name>Mn(2+)</name>
        <dbReference type="ChEBI" id="CHEBI:29035"/>
        <label>1</label>
    </ligand>
</feature>
<feature type="binding site" evidence="1">
    <location>
        <position position="41"/>
    </location>
    <ligand>
        <name>Mn(2+)</name>
        <dbReference type="ChEBI" id="CHEBI:29035"/>
        <label>1</label>
    </ligand>
</feature>
<feature type="binding site" evidence="1">
    <location>
        <position position="41"/>
    </location>
    <ligand>
        <name>Mn(2+)</name>
        <dbReference type="ChEBI" id="CHEBI:29035"/>
        <label>2</label>
    </ligand>
</feature>
<feature type="binding site" evidence="1">
    <location>
        <begin position="79"/>
        <end position="80"/>
    </location>
    <ligand>
        <name>substrate</name>
    </ligand>
</feature>
<feature type="binding site" evidence="1">
    <location>
        <position position="79"/>
    </location>
    <ligand>
        <name>Mn(2+)</name>
        <dbReference type="ChEBI" id="CHEBI:29035"/>
        <label>2</label>
    </ligand>
</feature>
<feature type="binding site" evidence="1">
    <location>
        <position position="114"/>
    </location>
    <ligand>
        <name>Mn(2+)</name>
        <dbReference type="ChEBI" id="CHEBI:29035"/>
        <label>2</label>
    </ligand>
</feature>
<feature type="binding site" evidence="1">
    <location>
        <position position="122"/>
    </location>
    <ligand>
        <name>substrate</name>
    </ligand>
</feature>
<feature type="binding site" evidence="1">
    <location>
        <position position="160"/>
    </location>
    <ligand>
        <name>substrate</name>
    </ligand>
</feature>
<feature type="binding site" evidence="1">
    <location>
        <position position="164"/>
    </location>
    <ligand>
        <name>substrate</name>
    </ligand>
</feature>
<feature type="binding site" evidence="1">
    <location>
        <position position="167"/>
    </location>
    <ligand>
        <name>substrate</name>
    </ligand>
</feature>
<feature type="binding site" evidence="1">
    <location>
        <position position="195"/>
    </location>
    <ligand>
        <name>Mn(2+)</name>
        <dbReference type="ChEBI" id="CHEBI:29035"/>
        <label>2</label>
    </ligand>
</feature>
<feature type="binding site" evidence="1">
    <location>
        <position position="195"/>
    </location>
    <ligand>
        <name>substrate</name>
    </ligand>
</feature>
<feature type="binding site" evidence="1">
    <location>
        <position position="197"/>
    </location>
    <ligand>
        <name>Mn(2+)</name>
        <dbReference type="ChEBI" id="CHEBI:29035"/>
        <label>1</label>
    </ligand>
</feature>
<sequence>MATLFIADLHLCVEEPAITAGFLRFLAGEARKADALYILGDLFEAWIGDDDPNPLHRQMAAAIKAVSDSGVPCYFIHGNRDFLLGKRFARESGMTLLPEEKVLELYGRRVLIMHGDTLCTDDAGYQAFRAKVHKPWLQMLFLALPLFVRKRIAARMRANSKEANSSKSLAIMDVNQNAVVSAMEKHQVQWLIHGHTHRPAVHELIANQQPAFRVVLGAWHTEGSMVKVTADDVELIHFPF</sequence>
<comment type="function">
    <text evidence="1">Hydrolyzes the pyrophosphate bond of UDP-2,3-diacylglucosamine to yield 2,3-diacylglucosamine 1-phosphate (lipid X) and UMP by catalyzing the attack of water at the alpha-P atom. Involved in the biosynthesis of lipid A, a phosphorylated glycolipid that anchors the lipopolysaccharide to the outer membrane of the cell.</text>
</comment>
<comment type="catalytic activity">
    <reaction evidence="1">
        <text>UDP-2-N,3-O-bis[(3R)-3-hydroxytetradecanoyl]-alpha-D-glucosamine + H2O = 2-N,3-O-bis[(3R)-3-hydroxytetradecanoyl]-alpha-D-glucosaminyl 1-phosphate + UMP + 2 H(+)</text>
        <dbReference type="Rhea" id="RHEA:25213"/>
        <dbReference type="ChEBI" id="CHEBI:15377"/>
        <dbReference type="ChEBI" id="CHEBI:15378"/>
        <dbReference type="ChEBI" id="CHEBI:57865"/>
        <dbReference type="ChEBI" id="CHEBI:57957"/>
        <dbReference type="ChEBI" id="CHEBI:78847"/>
        <dbReference type="EC" id="3.6.1.54"/>
    </reaction>
</comment>
<comment type="cofactor">
    <cofactor evidence="1">
        <name>Mn(2+)</name>
        <dbReference type="ChEBI" id="CHEBI:29035"/>
    </cofactor>
    <text evidence="1">Binds 2 Mn(2+) ions per subunit in a binuclear metal center.</text>
</comment>
<comment type="pathway">
    <text evidence="1">Glycolipid biosynthesis; lipid IV(A) biosynthesis; lipid IV(A) from (3R)-3-hydroxytetradecanoyl-[acyl-carrier-protein] and UDP-N-acetyl-alpha-D-glucosamine: step 4/6.</text>
</comment>
<comment type="subcellular location">
    <subcellularLocation>
        <location evidence="1">Cell inner membrane</location>
        <topology evidence="1">Peripheral membrane protein</topology>
        <orientation evidence="1">Cytoplasmic side</orientation>
    </subcellularLocation>
</comment>
<comment type="similarity">
    <text evidence="1">Belongs to the LpxH family.</text>
</comment>
<name>LPXH_SHIFL</name>
<proteinExistence type="inferred from homology"/>
<gene>
    <name evidence="1" type="primary">lpxH</name>
    <name type="ordered locus">SF0455</name>
    <name type="ordered locus">S0463</name>
</gene>
<protein>
    <recommendedName>
        <fullName evidence="1">UDP-2,3-diacylglucosamine hydrolase</fullName>
        <ecNumber evidence="1">3.6.1.54</ecNumber>
    </recommendedName>
    <alternativeName>
        <fullName evidence="1">UDP-2,3-diacylglucosamine diphosphatase</fullName>
    </alternativeName>
</protein>
<dbReference type="EC" id="3.6.1.54" evidence="1"/>
<dbReference type="EMBL" id="AE005674">
    <property type="protein sequence ID" value="AAN42109.1"/>
    <property type="molecule type" value="Genomic_DNA"/>
</dbReference>
<dbReference type="EMBL" id="AE014073">
    <property type="protein sequence ID" value="AAP15985.1"/>
    <property type="molecule type" value="Genomic_DNA"/>
</dbReference>
<dbReference type="RefSeq" id="WP_000212252.1">
    <property type="nucleotide sequence ID" value="NZ_WPGW01000107.1"/>
</dbReference>
<dbReference type="SMR" id="Q83M28"/>
<dbReference type="STRING" id="198214.SF0455"/>
<dbReference type="PaxDb" id="198214-SF0455"/>
<dbReference type="GeneID" id="75204390"/>
<dbReference type="KEGG" id="sfl:SF0455"/>
<dbReference type="KEGG" id="sfx:S0463"/>
<dbReference type="PATRIC" id="fig|198214.7.peg.521"/>
<dbReference type="HOGENOM" id="CLU_074586_0_0_6"/>
<dbReference type="UniPathway" id="UPA00359">
    <property type="reaction ID" value="UER00480"/>
</dbReference>
<dbReference type="Proteomes" id="UP000001006">
    <property type="component" value="Chromosome"/>
</dbReference>
<dbReference type="Proteomes" id="UP000002673">
    <property type="component" value="Chromosome"/>
</dbReference>
<dbReference type="GO" id="GO:0005737">
    <property type="term" value="C:cytoplasm"/>
    <property type="evidence" value="ECO:0007669"/>
    <property type="project" value="InterPro"/>
</dbReference>
<dbReference type="GO" id="GO:0019897">
    <property type="term" value="C:extrinsic component of plasma membrane"/>
    <property type="evidence" value="ECO:0007669"/>
    <property type="project" value="UniProtKB-UniRule"/>
</dbReference>
<dbReference type="GO" id="GO:0030145">
    <property type="term" value="F:manganese ion binding"/>
    <property type="evidence" value="ECO:0007669"/>
    <property type="project" value="UniProtKB-UniRule"/>
</dbReference>
<dbReference type="GO" id="GO:0008758">
    <property type="term" value="F:UDP-2,3-diacylglucosamine hydrolase activity"/>
    <property type="evidence" value="ECO:0007669"/>
    <property type="project" value="UniProtKB-UniRule"/>
</dbReference>
<dbReference type="GO" id="GO:0009245">
    <property type="term" value="P:lipid A biosynthetic process"/>
    <property type="evidence" value="ECO:0007669"/>
    <property type="project" value="UniProtKB-UniRule"/>
</dbReference>
<dbReference type="CDD" id="cd07398">
    <property type="entry name" value="MPP_YbbF-LpxH"/>
    <property type="match status" value="1"/>
</dbReference>
<dbReference type="FunFam" id="3.60.21.10:FF:000012">
    <property type="entry name" value="UDP-2,3-diacylglucosamine hydrolase"/>
    <property type="match status" value="1"/>
</dbReference>
<dbReference type="Gene3D" id="3.60.21.10">
    <property type="match status" value="1"/>
</dbReference>
<dbReference type="HAMAP" id="MF_00575">
    <property type="entry name" value="LpxH"/>
    <property type="match status" value="1"/>
</dbReference>
<dbReference type="InterPro" id="IPR004843">
    <property type="entry name" value="Calcineurin-like_PHP_ApaH"/>
</dbReference>
<dbReference type="InterPro" id="IPR043461">
    <property type="entry name" value="LpxH-like"/>
</dbReference>
<dbReference type="InterPro" id="IPR029052">
    <property type="entry name" value="Metallo-depent_PP-like"/>
</dbReference>
<dbReference type="InterPro" id="IPR010138">
    <property type="entry name" value="UDP-diacylglucosamine_Hdrlase"/>
</dbReference>
<dbReference type="NCBIfam" id="TIGR01854">
    <property type="entry name" value="lipid_A_lpxH"/>
    <property type="match status" value="1"/>
</dbReference>
<dbReference type="NCBIfam" id="NF003743">
    <property type="entry name" value="PRK05340.1"/>
    <property type="match status" value="1"/>
</dbReference>
<dbReference type="PANTHER" id="PTHR34990:SF1">
    <property type="entry name" value="UDP-2,3-DIACYLGLUCOSAMINE HYDROLASE"/>
    <property type="match status" value="1"/>
</dbReference>
<dbReference type="PANTHER" id="PTHR34990">
    <property type="entry name" value="UDP-2,3-DIACYLGLUCOSAMINE HYDROLASE-RELATED"/>
    <property type="match status" value="1"/>
</dbReference>
<dbReference type="Pfam" id="PF00149">
    <property type="entry name" value="Metallophos"/>
    <property type="match status" value="1"/>
</dbReference>
<dbReference type="SUPFAM" id="SSF56300">
    <property type="entry name" value="Metallo-dependent phosphatases"/>
    <property type="match status" value="1"/>
</dbReference>
<organism>
    <name type="scientific">Shigella flexneri</name>
    <dbReference type="NCBI Taxonomy" id="623"/>
    <lineage>
        <taxon>Bacteria</taxon>
        <taxon>Pseudomonadati</taxon>
        <taxon>Pseudomonadota</taxon>
        <taxon>Gammaproteobacteria</taxon>
        <taxon>Enterobacterales</taxon>
        <taxon>Enterobacteriaceae</taxon>
        <taxon>Shigella</taxon>
    </lineage>
</organism>
<keyword id="KW-0997">Cell inner membrane</keyword>
<keyword id="KW-1003">Cell membrane</keyword>
<keyword id="KW-0378">Hydrolase</keyword>
<keyword id="KW-0441">Lipid A biosynthesis</keyword>
<keyword id="KW-0444">Lipid biosynthesis</keyword>
<keyword id="KW-0443">Lipid metabolism</keyword>
<keyword id="KW-0464">Manganese</keyword>
<keyword id="KW-0472">Membrane</keyword>
<keyword id="KW-0479">Metal-binding</keyword>
<keyword id="KW-1185">Reference proteome</keyword>
<accession>Q83M28</accession>
<reference key="1">
    <citation type="journal article" date="2002" name="Nucleic Acids Res.">
        <title>Genome sequence of Shigella flexneri 2a: insights into pathogenicity through comparison with genomes of Escherichia coli K12 and O157.</title>
        <authorList>
            <person name="Jin Q."/>
            <person name="Yuan Z."/>
            <person name="Xu J."/>
            <person name="Wang Y."/>
            <person name="Shen Y."/>
            <person name="Lu W."/>
            <person name="Wang J."/>
            <person name="Liu H."/>
            <person name="Yang J."/>
            <person name="Yang F."/>
            <person name="Zhang X."/>
            <person name="Zhang J."/>
            <person name="Yang G."/>
            <person name="Wu H."/>
            <person name="Qu D."/>
            <person name="Dong J."/>
            <person name="Sun L."/>
            <person name="Xue Y."/>
            <person name="Zhao A."/>
            <person name="Gao Y."/>
            <person name="Zhu J."/>
            <person name="Kan B."/>
            <person name="Ding K."/>
            <person name="Chen S."/>
            <person name="Cheng H."/>
            <person name="Yao Z."/>
            <person name="He B."/>
            <person name="Chen R."/>
            <person name="Ma D."/>
            <person name="Qiang B."/>
            <person name="Wen Y."/>
            <person name="Hou Y."/>
            <person name="Yu J."/>
        </authorList>
    </citation>
    <scope>NUCLEOTIDE SEQUENCE [LARGE SCALE GENOMIC DNA]</scope>
    <source>
        <strain>301 / Serotype 2a</strain>
    </source>
</reference>
<reference key="2">
    <citation type="journal article" date="2003" name="Infect. Immun.">
        <title>Complete genome sequence and comparative genomics of Shigella flexneri serotype 2a strain 2457T.</title>
        <authorList>
            <person name="Wei J."/>
            <person name="Goldberg M.B."/>
            <person name="Burland V."/>
            <person name="Venkatesan M.M."/>
            <person name="Deng W."/>
            <person name="Fournier G."/>
            <person name="Mayhew G.F."/>
            <person name="Plunkett G. III"/>
            <person name="Rose D.J."/>
            <person name="Darling A."/>
            <person name="Mau B."/>
            <person name="Perna N.T."/>
            <person name="Payne S.M."/>
            <person name="Runyen-Janecky L.J."/>
            <person name="Zhou S."/>
            <person name="Schwartz D.C."/>
            <person name="Blattner F.R."/>
        </authorList>
    </citation>
    <scope>NUCLEOTIDE SEQUENCE [LARGE SCALE GENOMIC DNA]</scope>
    <source>
        <strain>ATCC 700930 / 2457T / Serotype 2a</strain>
    </source>
</reference>